<comment type="function">
    <text evidence="3">Secreted protein which suppresses the host allergic response by inhibiting the interaction of host IL33 with its receptor in order to maintain parasitic infection (PubMed:29045903). Binds to both host IL33 and host nuclear DNA and this dual binding blocks the interaction of IL33 with its receptor, and tethers IL33 within necrotic cells, preventing its release, and blocking allergic response initiation (PubMed:29045903).</text>
</comment>
<comment type="subunit">
    <text evidence="3">Interacts with mouse IL33 (in reduced form).</text>
</comment>
<comment type="subcellular location">
    <subcellularLocation>
        <location evidence="3">Secreted</location>
    </subcellularLocation>
    <subcellularLocation>
        <location evidence="3">Host nucleus</location>
    </subcellularLocation>
</comment>
<feature type="signal peptide" evidence="5">
    <location>
        <begin position="1"/>
        <end status="unknown"/>
    </location>
</feature>
<feature type="chain" id="PRO_0000448485" description="Alarmin release inhibitor" evidence="5">
    <location>
        <begin status="unknown"/>
        <end position="297"/>
    </location>
</feature>
<feature type="domain" description="Sushi" evidence="1">
    <location>
        <begin position="151"/>
        <end position="211"/>
    </location>
</feature>
<feature type="glycosylation site" description="N-linked (GlcNAc...) asparagine" evidence="2">
    <location>
        <position position="107"/>
    </location>
</feature>
<feature type="glycosylation site" description="N-linked (GlcNAc...) asparagine" evidence="2">
    <location>
        <position position="175"/>
    </location>
</feature>
<feature type="glycosylation site" description="N-linked (GlcNAc...) asparagine" evidence="2">
    <location>
        <position position="190"/>
    </location>
</feature>
<feature type="disulfide bond" evidence="1">
    <location>
        <begin position="183"/>
        <end position="209"/>
    </location>
</feature>
<feature type="helix" evidence="7">
    <location>
        <begin position="130"/>
        <end position="134"/>
    </location>
</feature>
<feature type="helix" evidence="7">
    <location>
        <begin position="139"/>
        <end position="141"/>
    </location>
</feature>
<feature type="strand" evidence="7">
    <location>
        <begin position="148"/>
        <end position="153"/>
    </location>
</feature>
<feature type="strand" evidence="7">
    <location>
        <begin position="161"/>
        <end position="163"/>
    </location>
</feature>
<feature type="strand" evidence="7">
    <location>
        <begin position="166"/>
        <end position="168"/>
    </location>
</feature>
<feature type="strand" evidence="7">
    <location>
        <begin position="170"/>
        <end position="173"/>
    </location>
</feature>
<feature type="strand" evidence="7">
    <location>
        <begin position="178"/>
        <end position="182"/>
    </location>
</feature>
<feature type="strand" evidence="7">
    <location>
        <begin position="189"/>
        <end position="193"/>
    </location>
</feature>
<feature type="strand" evidence="7">
    <location>
        <begin position="195"/>
        <end position="198"/>
    </location>
</feature>
<feature type="strand" evidence="7">
    <location>
        <begin position="201"/>
        <end position="204"/>
    </location>
</feature>
<feature type="helix" evidence="7">
    <location>
        <begin position="215"/>
        <end position="221"/>
    </location>
</feature>
<feature type="strand" evidence="7">
    <location>
        <begin position="225"/>
        <end position="229"/>
    </location>
</feature>
<feature type="helix" evidence="7">
    <location>
        <begin position="233"/>
        <end position="236"/>
    </location>
</feature>
<feature type="helix" evidence="7">
    <location>
        <begin position="241"/>
        <end position="244"/>
    </location>
</feature>
<feature type="strand" evidence="7">
    <location>
        <begin position="262"/>
        <end position="266"/>
    </location>
</feature>
<feature type="strand" evidence="7">
    <location>
        <begin position="279"/>
        <end position="285"/>
    </location>
</feature>
<feature type="strand" evidence="7">
    <location>
        <begin position="288"/>
        <end position="291"/>
    </location>
</feature>
<sequence>MDIIGQVYCFTGAPHTITCLLREQFINWYIKYKRSENYPAFRELVVMYRLFLALGFLTFINAAGQRCRFTDVERDKGYTGMLLKGRLRKTAGNGRTVELICGRGNHNYTCESGVLKESSPRQARCGCKGILEMLFDMPKEERPSPMYDSVTYDPTPNTPTTVGKDGIWNGVDYRNGSTVKPYCDTGPVINGSSKAVCVSGKWVPTLGVCPKMCSIGSLKENGKFVDVTATTKGDELNPPPREQTLIPIVRKVDKDKVQHGVKVVALCKAEDSTTAAEGVQEFECDNGKWKPEPVPCP</sequence>
<gene>
    <name evidence="4" type="primary">ARI</name>
    <name evidence="6" type="ORF">HPBE_LOCUS8140</name>
</gene>
<protein>
    <recommendedName>
        <fullName evidence="4">Alarmin release inhibitor</fullName>
        <shortName evidence="4">HpARI</shortName>
    </recommendedName>
</protein>
<keyword id="KW-0002">3D-structure</keyword>
<keyword id="KW-1015">Disulfide bond</keyword>
<keyword id="KW-0238">DNA-binding</keyword>
<keyword id="KW-0325">Glycoprotein</keyword>
<keyword id="KW-1048">Host nucleus</keyword>
<keyword id="KW-0964">Secreted</keyword>
<keyword id="KW-0732">Signal</keyword>
<keyword id="KW-0768">Sushi</keyword>
<name>HPARI_HELPZ</name>
<organism evidence="6">
    <name type="scientific">Heligmosomoides polygyrus</name>
    <name type="common">Parasitic roundworm</name>
    <dbReference type="NCBI Taxonomy" id="6339"/>
    <lineage>
        <taxon>Eukaryota</taxon>
        <taxon>Metazoa</taxon>
        <taxon>Ecdysozoa</taxon>
        <taxon>Nematoda</taxon>
        <taxon>Chromadorea</taxon>
        <taxon>Rhabditida</taxon>
        <taxon>Rhabditina</taxon>
        <taxon>Rhabditomorpha</taxon>
        <taxon>Strongyloidea</taxon>
        <taxon>Heligmosomidae</taxon>
        <taxon>Heligmosomoides</taxon>
    </lineage>
</organism>
<proteinExistence type="evidence at protein level"/>
<reference evidence="6" key="1">
    <citation type="submission" date="2018-11" db="EMBL/GenBank/DDBJ databases">
        <authorList>
            <consortium name="Pathogen Informatics"/>
        </authorList>
    </citation>
    <scope>NUCLEOTIDE SEQUENCE [LARGE SCALE GENOMIC DNA]</scope>
</reference>
<reference evidence="5" key="2">
    <citation type="journal article" date="2017" name="Immunity">
        <title>HpARI Protein Secreted by a Helminth Parasite Suppresses Interleukin-33.</title>
        <authorList>
            <person name="Osbourn M."/>
            <person name="Soares D.C."/>
            <person name="Vacca F."/>
            <person name="Cohen E.S."/>
            <person name="Scott I.C."/>
            <person name="Gregory W.F."/>
            <person name="Smyth D.J."/>
            <person name="Toivakka M."/>
            <person name="Kemter A.M."/>
            <person name="le Bihan T."/>
            <person name="Wear M."/>
            <person name="Hoving D."/>
            <person name="Filbey K.J."/>
            <person name="Hewitson J.P."/>
            <person name="Henderson H."/>
            <person name="Gonzalez-Ciscar A."/>
            <person name="Errington C."/>
            <person name="Vermeren S."/>
            <person name="Astier A.L."/>
            <person name="Wallace W.A."/>
            <person name="Schwarze J."/>
            <person name="Ivens A.C."/>
            <person name="Maizels R.M."/>
            <person name="McSorley H.J."/>
        </authorList>
    </citation>
    <scope>IDENTIFICATION BY MASS SPECTROMETRY</scope>
    <scope>FUNCTION</scope>
    <scope>INTERACTION WITH MOUSE IL33</scope>
    <scope>SUBCELLULAR LOCATION</scope>
</reference>
<evidence type="ECO:0000255" key="1">
    <source>
        <dbReference type="PROSITE-ProRule" id="PRU00302"/>
    </source>
</evidence>
<evidence type="ECO:0000255" key="2">
    <source>
        <dbReference type="PROSITE-ProRule" id="PRU00498"/>
    </source>
</evidence>
<evidence type="ECO:0000269" key="3">
    <source>
    </source>
</evidence>
<evidence type="ECO:0000303" key="4">
    <source>
    </source>
</evidence>
<evidence type="ECO:0000305" key="5"/>
<evidence type="ECO:0000312" key="6">
    <source>
        <dbReference type="EMBL" id="VDO75100.1"/>
    </source>
</evidence>
<evidence type="ECO:0007829" key="7">
    <source>
        <dbReference type="PDB" id="8Q5R"/>
    </source>
</evidence>
<dbReference type="EMBL" id="UZAH01026067">
    <property type="protein sequence ID" value="VDO75100.1"/>
    <property type="molecule type" value="Genomic_DNA"/>
</dbReference>
<dbReference type="PDB" id="8Q5R">
    <property type="method" value="X-ray"/>
    <property type="resolution" value="2.10 A"/>
    <property type="chains" value="B=63-297"/>
</dbReference>
<dbReference type="PDBsum" id="8Q5R"/>
<dbReference type="SASBDB" id="A0A3P7XL18"/>
<dbReference type="SMR" id="A0A3P7XL18"/>
<dbReference type="GlyCosmos" id="A0A3P7XL18">
    <property type="glycosylation" value="3 sites, No reported glycans"/>
</dbReference>
<dbReference type="Proteomes" id="UP000050761">
    <property type="component" value="Unassembled WGS sequence"/>
</dbReference>
<dbReference type="GO" id="GO:0005576">
    <property type="term" value="C:extracellular region"/>
    <property type="evidence" value="ECO:0007669"/>
    <property type="project" value="UniProtKB-SubCell"/>
</dbReference>
<dbReference type="GO" id="GO:0042025">
    <property type="term" value="C:host cell nucleus"/>
    <property type="evidence" value="ECO:0007669"/>
    <property type="project" value="UniProtKB-SubCell"/>
</dbReference>
<dbReference type="GO" id="GO:0003677">
    <property type="term" value="F:DNA binding"/>
    <property type="evidence" value="ECO:0000314"/>
    <property type="project" value="UniProtKB"/>
</dbReference>
<dbReference type="GO" id="GO:0002113">
    <property type="term" value="F:interleukin-33 binding"/>
    <property type="evidence" value="ECO:0000353"/>
    <property type="project" value="UniProtKB"/>
</dbReference>
<dbReference type="GO" id="GO:0060300">
    <property type="term" value="P:regulation of cytokine activity"/>
    <property type="evidence" value="ECO:0000314"/>
    <property type="project" value="UniProtKB"/>
</dbReference>
<dbReference type="GO" id="GO:0052572">
    <property type="term" value="P:response to host immune response"/>
    <property type="evidence" value="ECO:0000314"/>
    <property type="project" value="UniProtKB"/>
</dbReference>
<dbReference type="Gene3D" id="2.10.70.10">
    <property type="entry name" value="Complement Module, domain 1"/>
    <property type="match status" value="1"/>
</dbReference>
<dbReference type="InterPro" id="IPR035976">
    <property type="entry name" value="Sushi/SCR/CCP_sf"/>
</dbReference>
<dbReference type="SUPFAM" id="SSF57535">
    <property type="entry name" value="Complement control module/SCR domain"/>
    <property type="match status" value="1"/>
</dbReference>
<accession>A0A3P7XL18</accession>